<proteinExistence type="inferred from homology"/>
<evidence type="ECO:0000255" key="1">
    <source>
        <dbReference type="HAMAP-Rule" id="MF_01463"/>
    </source>
</evidence>
<feature type="chain" id="PRO_5000530340" description="Protein translocase subunit SecD">
    <location>
        <begin position="1"/>
        <end position="622"/>
    </location>
</feature>
<feature type="transmembrane region" description="Helical" evidence="1">
    <location>
        <begin position="6"/>
        <end position="26"/>
    </location>
</feature>
<feature type="transmembrane region" description="Helical" evidence="1">
    <location>
        <begin position="460"/>
        <end position="480"/>
    </location>
</feature>
<feature type="transmembrane region" description="Helical" evidence="1">
    <location>
        <begin position="485"/>
        <end position="505"/>
    </location>
</feature>
<feature type="transmembrane region" description="Helical" evidence="1">
    <location>
        <begin position="512"/>
        <end position="532"/>
    </location>
</feature>
<feature type="transmembrane region" description="Helical" evidence="1">
    <location>
        <begin position="559"/>
        <end position="579"/>
    </location>
</feature>
<feature type="transmembrane region" description="Helical" evidence="1">
    <location>
        <begin position="584"/>
        <end position="604"/>
    </location>
</feature>
<reference key="1">
    <citation type="journal article" date="2009" name="Stand. Genomic Sci.">
        <title>Complete genome sequence of Rhodothermus marinus type strain (R-10).</title>
        <authorList>
            <person name="Nolan M."/>
            <person name="Tindall B.J."/>
            <person name="Pomrenke H."/>
            <person name="Lapidus A."/>
            <person name="Copeland A."/>
            <person name="Glavina Del Rio T."/>
            <person name="Lucas S."/>
            <person name="Chen F."/>
            <person name="Tice H."/>
            <person name="Cheng J.F."/>
            <person name="Saunders E."/>
            <person name="Han C."/>
            <person name="Bruce D."/>
            <person name="Goodwin L."/>
            <person name="Chain P."/>
            <person name="Pitluck S."/>
            <person name="Ovchinikova G."/>
            <person name="Pati A."/>
            <person name="Ivanova N."/>
            <person name="Mavromatis K."/>
            <person name="Chen A."/>
            <person name="Palaniappan K."/>
            <person name="Land M."/>
            <person name="Hauser L."/>
            <person name="Chang Y.J."/>
            <person name="Jeffries C.D."/>
            <person name="Brettin T."/>
            <person name="Goker M."/>
            <person name="Bristow J."/>
            <person name="Eisen J.A."/>
            <person name="Markowitz V."/>
            <person name="Hugenholtz P."/>
            <person name="Kyrpides N.C."/>
            <person name="Klenk H.P."/>
            <person name="Detter J.C."/>
        </authorList>
    </citation>
    <scope>NUCLEOTIDE SEQUENCE [LARGE SCALE GENOMIC DNA]</scope>
    <source>
        <strain>ATCC 43812 / DSM 4252 / R-10</strain>
    </source>
</reference>
<protein>
    <recommendedName>
        <fullName evidence="1">Protein translocase subunit SecD</fullName>
    </recommendedName>
</protein>
<keyword id="KW-0997">Cell inner membrane</keyword>
<keyword id="KW-1003">Cell membrane</keyword>
<keyword id="KW-0472">Membrane</keyword>
<keyword id="KW-0653">Protein transport</keyword>
<keyword id="KW-1185">Reference proteome</keyword>
<keyword id="KW-0811">Translocation</keyword>
<keyword id="KW-0812">Transmembrane</keyword>
<keyword id="KW-1133">Transmembrane helix</keyword>
<keyword id="KW-0813">Transport</keyword>
<name>SECD_RHOM4</name>
<dbReference type="EMBL" id="CP001807">
    <property type="protein sequence ID" value="ACY48342.1"/>
    <property type="molecule type" value="Genomic_DNA"/>
</dbReference>
<dbReference type="RefSeq" id="WP_012843953.1">
    <property type="nucleotide sequence ID" value="NC_013501.1"/>
</dbReference>
<dbReference type="SMR" id="D0MIN4"/>
<dbReference type="STRING" id="518766.Rmar_1455"/>
<dbReference type="KEGG" id="rmr:Rmar_1455"/>
<dbReference type="eggNOG" id="COG0342">
    <property type="taxonomic scope" value="Bacteria"/>
</dbReference>
<dbReference type="HOGENOM" id="CLU_007894_4_3_10"/>
<dbReference type="OrthoDB" id="9805019at2"/>
<dbReference type="Proteomes" id="UP000002221">
    <property type="component" value="Chromosome"/>
</dbReference>
<dbReference type="GO" id="GO:0005886">
    <property type="term" value="C:plasma membrane"/>
    <property type="evidence" value="ECO:0007669"/>
    <property type="project" value="UniProtKB-SubCell"/>
</dbReference>
<dbReference type="GO" id="GO:0015450">
    <property type="term" value="F:protein-transporting ATPase activity"/>
    <property type="evidence" value="ECO:0007669"/>
    <property type="project" value="InterPro"/>
</dbReference>
<dbReference type="GO" id="GO:0065002">
    <property type="term" value="P:intracellular protein transmembrane transport"/>
    <property type="evidence" value="ECO:0007669"/>
    <property type="project" value="UniProtKB-UniRule"/>
</dbReference>
<dbReference type="GO" id="GO:0006605">
    <property type="term" value="P:protein targeting"/>
    <property type="evidence" value="ECO:0007669"/>
    <property type="project" value="UniProtKB-UniRule"/>
</dbReference>
<dbReference type="GO" id="GO:0043952">
    <property type="term" value="P:protein transport by the Sec complex"/>
    <property type="evidence" value="ECO:0007669"/>
    <property type="project" value="UniProtKB-UniRule"/>
</dbReference>
<dbReference type="FunFam" id="1.20.1640.10:FF:000004">
    <property type="entry name" value="Protein translocase subunit SecD"/>
    <property type="match status" value="1"/>
</dbReference>
<dbReference type="Gene3D" id="3.30.1360.200">
    <property type="match status" value="1"/>
</dbReference>
<dbReference type="Gene3D" id="3.30.70.3220">
    <property type="match status" value="1"/>
</dbReference>
<dbReference type="Gene3D" id="1.20.1640.10">
    <property type="entry name" value="Multidrug efflux transporter AcrB transmembrane domain"/>
    <property type="match status" value="1"/>
</dbReference>
<dbReference type="HAMAP" id="MF_01463_B">
    <property type="entry name" value="SecD_B"/>
    <property type="match status" value="1"/>
</dbReference>
<dbReference type="InterPro" id="IPR005791">
    <property type="entry name" value="SecD"/>
</dbReference>
<dbReference type="InterPro" id="IPR022813">
    <property type="entry name" value="SecD/SecF_arch_bac"/>
</dbReference>
<dbReference type="InterPro" id="IPR022646">
    <property type="entry name" value="SecD/SecF_CS"/>
</dbReference>
<dbReference type="InterPro" id="IPR048631">
    <property type="entry name" value="SecD_1st"/>
</dbReference>
<dbReference type="InterPro" id="IPR048634">
    <property type="entry name" value="SecD_SecF_C"/>
</dbReference>
<dbReference type="InterPro" id="IPR055344">
    <property type="entry name" value="SecD_SecF_C_bact"/>
</dbReference>
<dbReference type="InterPro" id="IPR054384">
    <property type="entry name" value="SecDF_P1_head"/>
</dbReference>
<dbReference type="NCBIfam" id="TIGR00916">
    <property type="entry name" value="2A0604s01"/>
    <property type="match status" value="1"/>
</dbReference>
<dbReference type="NCBIfam" id="TIGR01129">
    <property type="entry name" value="secD"/>
    <property type="match status" value="1"/>
</dbReference>
<dbReference type="PANTHER" id="PTHR30081:SF1">
    <property type="entry name" value="PROTEIN TRANSLOCASE SUBUNIT SECD"/>
    <property type="match status" value="1"/>
</dbReference>
<dbReference type="PANTHER" id="PTHR30081">
    <property type="entry name" value="PROTEIN-EXPORT MEMBRANE PROTEIN SEC"/>
    <property type="match status" value="1"/>
</dbReference>
<dbReference type="Pfam" id="PF07549">
    <property type="entry name" value="Sec_GG"/>
    <property type="match status" value="1"/>
</dbReference>
<dbReference type="Pfam" id="PF21760">
    <property type="entry name" value="SecD_1st"/>
    <property type="match status" value="1"/>
</dbReference>
<dbReference type="Pfam" id="PF02355">
    <property type="entry name" value="SecD_SecF_C"/>
    <property type="match status" value="1"/>
</dbReference>
<dbReference type="Pfam" id="PF22599">
    <property type="entry name" value="SecDF_P1_head"/>
    <property type="match status" value="1"/>
</dbReference>
<dbReference type="SUPFAM" id="SSF82866">
    <property type="entry name" value="Multidrug efflux transporter AcrB transmembrane domain"/>
    <property type="match status" value="1"/>
</dbReference>
<gene>
    <name evidence="1" type="primary">secD</name>
    <name type="ordered locus">Rmar_1455</name>
</gene>
<comment type="function">
    <text evidence="1">Part of the Sec protein translocase complex. Interacts with the SecYEG preprotein conducting channel. SecDF uses the proton motive force (PMF) to complete protein translocation after the ATP-dependent function of SecA.</text>
</comment>
<comment type="subunit">
    <text evidence="1">Forms a complex with SecF. Part of the essential Sec protein translocation apparatus which comprises SecA, SecYEG and auxiliary proteins SecDF. Other proteins may also be involved.</text>
</comment>
<comment type="subcellular location">
    <subcellularLocation>
        <location evidence="1">Cell inner membrane</location>
        <topology evidence="1">Multi-pass membrane protein</topology>
    </subcellularLocation>
</comment>
<comment type="similarity">
    <text evidence="1">Belongs to the SecD/SecF family. SecD subfamily.</text>
</comment>
<accession>D0MIN4</accession>
<sequence>MKRNGFKIGVTLALLLLCGYYLYPTVRYALLQRKLNRMSEEERAAFIEANYGTIQSLRERALKLGLDLQGGMHVTLEVRVDALIRELATDVDETFEEVLAAARERARSGDVSLIDAFVEEFERRDPNARLSRYFRNPDAGITRRSSNEEVAAYLRQQAEEAVNRAIEIIRDRVDRYGVTEPVIQKQGTRRIVVELPGVDDPERVRRLLRGTARLEFRLMADPQLLQAALQDIIAYYEPDTTAASETSAVTDTATADTSLAALLGEQPSPERPRNPLLAVMQPVGQGVVFGIVAGPDTAQVNRLLRNPEVQALLPSGIELLYTANPVGTDEQGRPLYYLLGVRKEVELTGEVITDARVEFDELNRPQVSMTMNSEGARIWARLTGANVGKHIAIVLDNVVYSYPVVNERIPSGRSSITGLDSREEAQDIVTVLKSGALPAPVDIIEERTVGPSLGEASIRAGLRSVLTGLLLVALFMIFYYRTGGMIADLALVLNIIFILGILAAFNATLTLPGIAGIVLTIGMAVDANVLIFERIREEQATGKTLRAAIDLGYSKAFSAIFDANITTFFTAAILYSFGVGPIQGFAVTLMAGIAASLFSAIVITRIIFDYLVLERKLMVSVG</sequence>
<organism>
    <name type="scientific">Rhodothermus marinus (strain ATCC 43812 / DSM 4252 / R-10)</name>
    <name type="common">Rhodothermus obamensis</name>
    <dbReference type="NCBI Taxonomy" id="518766"/>
    <lineage>
        <taxon>Bacteria</taxon>
        <taxon>Pseudomonadati</taxon>
        <taxon>Rhodothermota</taxon>
        <taxon>Rhodothermia</taxon>
        <taxon>Rhodothermales</taxon>
        <taxon>Rhodothermaceae</taxon>
        <taxon>Rhodothermus</taxon>
    </lineage>
</organism>